<organism>
    <name type="scientific">Corynebacterium kroppenstedtii (strain DSM 44385 / JCM 11950 / CIP 105744 / CCUG 35717)</name>
    <dbReference type="NCBI Taxonomy" id="645127"/>
    <lineage>
        <taxon>Bacteria</taxon>
        <taxon>Bacillati</taxon>
        <taxon>Actinomycetota</taxon>
        <taxon>Actinomycetes</taxon>
        <taxon>Mycobacteriales</taxon>
        <taxon>Corynebacteriaceae</taxon>
        <taxon>Corynebacterium</taxon>
    </lineage>
</organism>
<reference key="1">
    <citation type="journal article" date="2008" name="J. Biotechnol.">
        <title>Ultrafast pyrosequencing of Corynebacterium kroppenstedtii DSM44385 revealed insights into the physiology of a lipophilic corynebacterium that lacks mycolic acids.</title>
        <authorList>
            <person name="Tauch A."/>
            <person name="Schneider J."/>
            <person name="Szczepanowski R."/>
            <person name="Tilker A."/>
            <person name="Viehoever P."/>
            <person name="Gartemann K.-H."/>
            <person name="Arnold W."/>
            <person name="Blom J."/>
            <person name="Brinkrolf K."/>
            <person name="Brune I."/>
            <person name="Goetker S."/>
            <person name="Weisshaar B."/>
            <person name="Goesmann A."/>
            <person name="Droege M."/>
            <person name="Puehler A."/>
        </authorList>
    </citation>
    <scope>NUCLEOTIDE SEQUENCE [LARGE SCALE GENOMIC DNA]</scope>
    <source>
        <strain>DSM 44385 / JCM 11950 / CIP 105744 / CCUG 35717</strain>
    </source>
</reference>
<sequence length="626" mass="67234">MGRAVGIDLGTTNSVVSVLEGGDPTVIANSEGSRTTPSVVAFSKNGEVLVGQSAKNQAVTNVDRTIRSVKRHIGDDSWNVDIDDKKYTAQEISARILQKLKRDAESYLGEDVTDAVITVPAYFSDAQRQATKDAGQIAGLNVLRIVNEPTAAALAYGLEKGEDDQTILVYDLGGGTFDVSLLEIGEGVVEVRATNGDNKLGGDDWDQRIVDWLTDKFKSSHGIDLTKDKMAMQRLREAAEKAKIELSSSQQTSINLPYITVDEDKNPLFLDETLSRTEFQRITQDLLDRTRKPFQQVLSDAGISVSDIDHVVLVGGSTRMPAVTDLVKELTGGKEPNKGVNPDEVVAVGAALQAGVLRGEVKDVLLLDVTPLSLGIETKGGVMTKLIERNTTIPTKRSETFTTAEDNQPSVQIQVFQGEREMASANKLLGSFELGGIAPAPRGIPQIEVTFDIDANGIVHVTAKDKGTGKENTIKIQDGSGLSQDEIDRMVKDAEAHAEEDKKRREEQEVRNSAESMVYQTRKFVDDNKEKVSQDIQDKVEEAAKGVDEALKGDDIEAIKSAVEKLSAESQEMGKSLYESEAANGGTTGGAAGAAGAAGADAGSDNSDPNVVDAEVVDEDKKDDDK</sequence>
<comment type="function">
    <text evidence="1">Acts as a chaperone.</text>
</comment>
<comment type="induction">
    <text evidence="1">By stress conditions e.g. heat shock.</text>
</comment>
<comment type="similarity">
    <text evidence="1">Belongs to the heat shock protein 70 family.</text>
</comment>
<gene>
    <name evidence="1" type="primary">dnaK</name>
    <name type="ordered locus">ckrop_0278</name>
</gene>
<keyword id="KW-0067">ATP-binding</keyword>
<keyword id="KW-0143">Chaperone</keyword>
<keyword id="KW-0547">Nucleotide-binding</keyword>
<keyword id="KW-0597">Phosphoprotein</keyword>
<keyword id="KW-1185">Reference proteome</keyword>
<keyword id="KW-0346">Stress response</keyword>
<protein>
    <recommendedName>
        <fullName evidence="1">Chaperone protein DnaK</fullName>
    </recommendedName>
    <alternativeName>
        <fullName evidence="1">HSP70</fullName>
    </alternativeName>
    <alternativeName>
        <fullName evidence="1">Heat shock 70 kDa protein</fullName>
    </alternativeName>
    <alternativeName>
        <fullName evidence="1">Heat shock protein 70</fullName>
    </alternativeName>
</protein>
<proteinExistence type="inferred from homology"/>
<evidence type="ECO:0000255" key="1">
    <source>
        <dbReference type="HAMAP-Rule" id="MF_00332"/>
    </source>
</evidence>
<evidence type="ECO:0000256" key="2">
    <source>
        <dbReference type="SAM" id="MobiDB-lite"/>
    </source>
</evidence>
<feature type="chain" id="PRO_1000205181" description="Chaperone protein DnaK">
    <location>
        <begin position="1"/>
        <end position="626"/>
    </location>
</feature>
<feature type="region of interest" description="Disordered" evidence="2">
    <location>
        <begin position="496"/>
        <end position="515"/>
    </location>
</feature>
<feature type="region of interest" description="Disordered" evidence="2">
    <location>
        <begin position="569"/>
        <end position="626"/>
    </location>
</feature>
<feature type="compositionally biased region" description="Basic and acidic residues" evidence="2">
    <location>
        <begin position="496"/>
        <end position="512"/>
    </location>
</feature>
<feature type="compositionally biased region" description="Low complexity" evidence="2">
    <location>
        <begin position="594"/>
        <end position="614"/>
    </location>
</feature>
<feature type="modified residue" description="Phosphothreonine; by autocatalysis" evidence="1">
    <location>
        <position position="176"/>
    </location>
</feature>
<accession>C4LGV8</accession>
<name>DNAK_CORK4</name>
<dbReference type="EMBL" id="CP001620">
    <property type="protein sequence ID" value="ACR17063.1"/>
    <property type="molecule type" value="Genomic_DNA"/>
</dbReference>
<dbReference type="RefSeq" id="WP_012730951.1">
    <property type="nucleotide sequence ID" value="NC_012704.1"/>
</dbReference>
<dbReference type="SMR" id="C4LGV8"/>
<dbReference type="STRING" id="645127.ckrop_0278"/>
<dbReference type="KEGG" id="ckp:ckrop_0278"/>
<dbReference type="eggNOG" id="COG0443">
    <property type="taxonomic scope" value="Bacteria"/>
</dbReference>
<dbReference type="HOGENOM" id="CLU_005965_2_4_11"/>
<dbReference type="OrthoDB" id="9766019at2"/>
<dbReference type="Proteomes" id="UP000001473">
    <property type="component" value="Chromosome"/>
</dbReference>
<dbReference type="GO" id="GO:0005524">
    <property type="term" value="F:ATP binding"/>
    <property type="evidence" value="ECO:0007669"/>
    <property type="project" value="UniProtKB-UniRule"/>
</dbReference>
<dbReference type="GO" id="GO:0140662">
    <property type="term" value="F:ATP-dependent protein folding chaperone"/>
    <property type="evidence" value="ECO:0007669"/>
    <property type="project" value="InterPro"/>
</dbReference>
<dbReference type="GO" id="GO:0051082">
    <property type="term" value="F:unfolded protein binding"/>
    <property type="evidence" value="ECO:0007669"/>
    <property type="project" value="InterPro"/>
</dbReference>
<dbReference type="CDD" id="cd10234">
    <property type="entry name" value="ASKHA_NBD_HSP70_DnaK-like"/>
    <property type="match status" value="1"/>
</dbReference>
<dbReference type="FunFam" id="2.60.34.10:FF:000014">
    <property type="entry name" value="Chaperone protein DnaK HSP70"/>
    <property type="match status" value="1"/>
</dbReference>
<dbReference type="FunFam" id="1.20.1270.10:FF:000001">
    <property type="entry name" value="Molecular chaperone DnaK"/>
    <property type="match status" value="1"/>
</dbReference>
<dbReference type="FunFam" id="3.30.420.40:FF:000071">
    <property type="entry name" value="Molecular chaperone DnaK"/>
    <property type="match status" value="1"/>
</dbReference>
<dbReference type="FunFam" id="3.90.640.10:FF:000003">
    <property type="entry name" value="Molecular chaperone DnaK"/>
    <property type="match status" value="1"/>
</dbReference>
<dbReference type="Gene3D" id="1.20.1270.10">
    <property type="match status" value="1"/>
</dbReference>
<dbReference type="Gene3D" id="3.30.420.40">
    <property type="match status" value="3"/>
</dbReference>
<dbReference type="Gene3D" id="3.90.640.10">
    <property type="entry name" value="Actin, Chain A, domain 4"/>
    <property type="match status" value="1"/>
</dbReference>
<dbReference type="Gene3D" id="2.60.34.10">
    <property type="entry name" value="Substrate Binding Domain Of DNAk, Chain A, domain 1"/>
    <property type="match status" value="1"/>
</dbReference>
<dbReference type="HAMAP" id="MF_00332">
    <property type="entry name" value="DnaK"/>
    <property type="match status" value="1"/>
</dbReference>
<dbReference type="InterPro" id="IPR043129">
    <property type="entry name" value="ATPase_NBD"/>
</dbReference>
<dbReference type="InterPro" id="IPR012725">
    <property type="entry name" value="Chaperone_DnaK"/>
</dbReference>
<dbReference type="InterPro" id="IPR018181">
    <property type="entry name" value="Heat_shock_70_CS"/>
</dbReference>
<dbReference type="InterPro" id="IPR029048">
    <property type="entry name" value="HSP70_C_sf"/>
</dbReference>
<dbReference type="InterPro" id="IPR029047">
    <property type="entry name" value="HSP70_peptide-bd_sf"/>
</dbReference>
<dbReference type="InterPro" id="IPR013126">
    <property type="entry name" value="Hsp_70_fam"/>
</dbReference>
<dbReference type="NCBIfam" id="NF001413">
    <property type="entry name" value="PRK00290.1"/>
    <property type="match status" value="1"/>
</dbReference>
<dbReference type="NCBIfam" id="TIGR02350">
    <property type="entry name" value="prok_dnaK"/>
    <property type="match status" value="1"/>
</dbReference>
<dbReference type="PANTHER" id="PTHR19375">
    <property type="entry name" value="HEAT SHOCK PROTEIN 70KDA"/>
    <property type="match status" value="1"/>
</dbReference>
<dbReference type="Pfam" id="PF00012">
    <property type="entry name" value="HSP70"/>
    <property type="match status" value="1"/>
</dbReference>
<dbReference type="PRINTS" id="PR00301">
    <property type="entry name" value="HEATSHOCK70"/>
</dbReference>
<dbReference type="SUPFAM" id="SSF53067">
    <property type="entry name" value="Actin-like ATPase domain"/>
    <property type="match status" value="2"/>
</dbReference>
<dbReference type="SUPFAM" id="SSF100934">
    <property type="entry name" value="Heat shock protein 70kD (HSP70), C-terminal subdomain"/>
    <property type="match status" value="1"/>
</dbReference>
<dbReference type="SUPFAM" id="SSF100920">
    <property type="entry name" value="Heat shock protein 70kD (HSP70), peptide-binding domain"/>
    <property type="match status" value="1"/>
</dbReference>
<dbReference type="PROSITE" id="PS00297">
    <property type="entry name" value="HSP70_1"/>
    <property type="match status" value="1"/>
</dbReference>
<dbReference type="PROSITE" id="PS00329">
    <property type="entry name" value="HSP70_2"/>
    <property type="match status" value="1"/>
</dbReference>
<dbReference type="PROSITE" id="PS01036">
    <property type="entry name" value="HSP70_3"/>
    <property type="match status" value="1"/>
</dbReference>